<keyword id="KW-0106">Calcium</keyword>
<keyword id="KW-0165">Cleavage on pair of basic residues</keyword>
<keyword id="KW-0963">Cytoplasm</keyword>
<keyword id="KW-0372">Hormone</keyword>
<keyword id="KW-0539">Nucleus</keyword>
<keyword id="KW-1185">Reference proteome</keyword>
<keyword id="KW-0964">Secreted</keyword>
<keyword id="KW-0732">Signal</keyword>
<name>PTHR_RABIT</name>
<sequence length="177" mass="20005">MLRRLVQQWSVAVFLLSYSVPSCGRSVEGPGRRLKRAVSEHQLLHDKGKSIQDLRRRFFLHHLIAEIHTAEIRATSEVSPNSKPAANTKNHAVRFGSDDEGRYLTQETNKVEPYKEQPLKTPGKKKKGKPGKRKEQEKKKRRTRSAWPLSAGAGSGLAGDHLSDISEPEPELDSRRH</sequence>
<proteinExistence type="evidence at transcript level"/>
<accession>Q9GLC7</accession>
<feature type="signal peptide" evidence="3">
    <location>
        <begin position="1"/>
        <end position="24"/>
    </location>
</feature>
<feature type="propeptide" id="PRO_0000023232" evidence="1">
    <location>
        <begin position="25"/>
        <end position="34"/>
    </location>
</feature>
<feature type="chain" id="PRO_0000023233" description="Parathyroid hormone-related protein">
    <location>
        <begin position="37"/>
        <end position="177"/>
    </location>
</feature>
<feature type="peptide" id="PRO_0000023234" description="Osteostatin" evidence="1">
    <location>
        <begin position="143"/>
        <end position="175"/>
    </location>
</feature>
<feature type="region of interest" description="Important for receptor binding" evidence="1">
    <location>
        <begin position="57"/>
        <end position="68"/>
    </location>
</feature>
<feature type="region of interest" description="Disordered" evidence="4">
    <location>
        <begin position="74"/>
        <end position="177"/>
    </location>
</feature>
<feature type="short sequence motif" description="Nuclear localization signal" evidence="1">
    <location>
        <begin position="108"/>
        <end position="129"/>
    </location>
</feature>
<feature type="compositionally biased region" description="Polar residues" evidence="4">
    <location>
        <begin position="76"/>
        <end position="90"/>
    </location>
</feature>
<feature type="compositionally biased region" description="Basic and acidic residues" evidence="4">
    <location>
        <begin position="109"/>
        <end position="118"/>
    </location>
</feature>
<feature type="compositionally biased region" description="Basic residues" evidence="4">
    <location>
        <begin position="122"/>
        <end position="132"/>
    </location>
</feature>
<reference key="1">
    <citation type="submission" date="2000-08" db="EMBL/GenBank/DDBJ databases">
        <title>Cloning and expression of rabbit parathyroid hormone-related protein.</title>
        <authorList>
            <person name="McCaughern-Carucci J.F."/>
            <person name="Mitnick M."/>
            <person name="Emanuel J.R."/>
            <person name="Dworetzky S.I."/>
        </authorList>
    </citation>
    <scope>NUCLEOTIDE SEQUENCE [MRNA]</scope>
</reference>
<gene>
    <name type="primary">PTHLH</name>
    <name type="synonym">PTHRP</name>
</gene>
<dbReference type="EMBL" id="AF300703">
    <property type="protein sequence ID" value="AAG13414.1"/>
    <property type="molecule type" value="mRNA"/>
</dbReference>
<dbReference type="RefSeq" id="NP_001076122.1">
    <property type="nucleotide sequence ID" value="NM_001082653.1"/>
</dbReference>
<dbReference type="SMR" id="Q9GLC7"/>
<dbReference type="FunCoup" id="Q9GLC7">
    <property type="interactions" value="539"/>
</dbReference>
<dbReference type="STRING" id="9986.ENSOCUP00000027904"/>
<dbReference type="PaxDb" id="9986-ENSOCUP00000011922"/>
<dbReference type="GeneID" id="100009357"/>
<dbReference type="KEGG" id="ocu:100009357"/>
<dbReference type="CTD" id="5744"/>
<dbReference type="eggNOG" id="ENOG502S3J9">
    <property type="taxonomic scope" value="Eukaryota"/>
</dbReference>
<dbReference type="InParanoid" id="Q9GLC7"/>
<dbReference type="OrthoDB" id="9892514at2759"/>
<dbReference type="Proteomes" id="UP000001811">
    <property type="component" value="Unplaced"/>
</dbReference>
<dbReference type="GO" id="GO:0005737">
    <property type="term" value="C:cytoplasm"/>
    <property type="evidence" value="ECO:0007669"/>
    <property type="project" value="UniProtKB-SubCell"/>
</dbReference>
<dbReference type="GO" id="GO:0005576">
    <property type="term" value="C:extracellular region"/>
    <property type="evidence" value="ECO:0007669"/>
    <property type="project" value="UniProtKB-SubCell"/>
</dbReference>
<dbReference type="GO" id="GO:0005634">
    <property type="term" value="C:nucleus"/>
    <property type="evidence" value="ECO:0007669"/>
    <property type="project" value="UniProtKB-SubCell"/>
</dbReference>
<dbReference type="GO" id="GO:0005179">
    <property type="term" value="F:hormone activity"/>
    <property type="evidence" value="ECO:0007669"/>
    <property type="project" value="UniProtKB-KW"/>
</dbReference>
<dbReference type="GO" id="GO:0051428">
    <property type="term" value="F:peptide hormone receptor binding"/>
    <property type="evidence" value="ECO:0000250"/>
    <property type="project" value="UniProtKB"/>
</dbReference>
<dbReference type="GO" id="GO:0030282">
    <property type="term" value="P:bone mineralization"/>
    <property type="evidence" value="ECO:0007669"/>
    <property type="project" value="InterPro"/>
</dbReference>
<dbReference type="InterPro" id="IPR003626">
    <property type="entry name" value="PTH-rel"/>
</dbReference>
<dbReference type="InterPro" id="IPR001415">
    <property type="entry name" value="PTH/PTH-rel"/>
</dbReference>
<dbReference type="PANTHER" id="PTHR17223">
    <property type="entry name" value="PARATHYROID HORMONE-RELATED"/>
    <property type="match status" value="1"/>
</dbReference>
<dbReference type="PANTHER" id="PTHR17223:SF0">
    <property type="entry name" value="PARATHYROID HORMONE-RELATED PROTEIN"/>
    <property type="match status" value="1"/>
</dbReference>
<dbReference type="Pfam" id="PF01279">
    <property type="entry name" value="Parathyroid"/>
    <property type="match status" value="1"/>
</dbReference>
<dbReference type="SMART" id="SM00087">
    <property type="entry name" value="PTH"/>
    <property type="match status" value="1"/>
</dbReference>
<dbReference type="PROSITE" id="PS00335">
    <property type="entry name" value="PARATHYROID"/>
    <property type="match status" value="1"/>
</dbReference>
<protein>
    <recommendedName>
        <fullName>Parathyroid hormone-related protein</fullName>
        <shortName>PTH-rP</shortName>
        <shortName>PTHrP</shortName>
    </recommendedName>
    <component>
        <recommendedName>
            <fullName>Osteostatin</fullName>
        </recommendedName>
    </component>
</protein>
<evidence type="ECO:0000250" key="1">
    <source>
        <dbReference type="UniProtKB" id="P12272"/>
    </source>
</evidence>
<evidence type="ECO:0000250" key="2">
    <source>
        <dbReference type="UniProtKB" id="P22858"/>
    </source>
</evidence>
<evidence type="ECO:0000255" key="3"/>
<evidence type="ECO:0000256" key="4">
    <source>
        <dbReference type="SAM" id="MobiDB-lite"/>
    </source>
</evidence>
<evidence type="ECO:0000305" key="5"/>
<organism>
    <name type="scientific">Oryctolagus cuniculus</name>
    <name type="common">Rabbit</name>
    <dbReference type="NCBI Taxonomy" id="9986"/>
    <lineage>
        <taxon>Eukaryota</taxon>
        <taxon>Metazoa</taxon>
        <taxon>Chordata</taxon>
        <taxon>Craniata</taxon>
        <taxon>Vertebrata</taxon>
        <taxon>Euteleostomi</taxon>
        <taxon>Mammalia</taxon>
        <taxon>Eutheria</taxon>
        <taxon>Euarchontoglires</taxon>
        <taxon>Glires</taxon>
        <taxon>Lagomorpha</taxon>
        <taxon>Leporidae</taxon>
        <taxon>Oryctolagus</taxon>
    </lineage>
</organism>
<comment type="function">
    <text evidence="1 2">Neuroendocrine peptide which is a critical regulator of cellular and organ growth, development, migration, differentiation and survival and of epithelial calcium ion transport (By similarity). Acts by binding to its receptor, PTH1R, activating G protein-coupled receptor signaling (By similarity). Regulates endochondral bone development and epithelial-mesenchymal interactions during the formation of the mammary glands and teeth (By similarity). Required for skeletal homeostasis. Promotes mammary mesenchyme differentiation and bud outgrowth by modulating mesenchymal cell responsiveness to BMPs (By similarity). Up-regulates BMPR1A expression in the mammary mesenchyme and this increases the sensitivity of these cells to BMPs and allows them to respond to BMP4 in a paracrine and/or autocrine fashion. BMP4 signaling in the mesenchyme, in turn, triggers epithelial outgrowth and augments MSX2 expression, which causes the mammary mesenchyme to inhibit hair follicle formation within the nipple sheath (By similarity).</text>
</comment>
<comment type="function">
    <molecule>Osteostatin</molecule>
    <text evidence="1">Potent inhibitor of osteoclastic bone resorption.</text>
</comment>
<comment type="subunit">
    <text evidence="1">PTHrP interacts with PTH1R (via N-terminal extracellular domain).</text>
</comment>
<comment type="subcellular location">
    <subcellularLocation>
        <location evidence="1">Secreted</location>
    </subcellularLocation>
    <subcellularLocation>
        <location evidence="1">Cytoplasm</location>
    </subcellularLocation>
    <subcellularLocation>
        <location evidence="1">Nucleus</location>
    </subcellularLocation>
</comment>
<comment type="PTM">
    <text evidence="1">There are several secretory forms, including osteostatin, arising from endoproteolytic cleavage of the initial translation product. Each of these secretory forms is believed to have one or more of its own receptors that mediates the normal paracrine, autocrine and endocrine actions (By similarity).</text>
</comment>
<comment type="similarity">
    <text evidence="5">Belongs to the parathyroid hormone family.</text>
</comment>